<gene>
    <name evidence="1" type="primary">dtd</name>
    <name type="ordered locus">BCQ_4192</name>
</gene>
<comment type="function">
    <text evidence="1">An aminoacyl-tRNA editing enzyme that deacylates mischarged D-aminoacyl-tRNAs. Also deacylates mischarged glycyl-tRNA(Ala), protecting cells against glycine mischarging by AlaRS. Acts via tRNA-based rather than protein-based catalysis; rejects L-amino acids rather than detecting D-amino acids in the active site. By recycling D-aminoacyl-tRNA to D-amino acids and free tRNA molecules, this enzyme counteracts the toxicity associated with the formation of D-aminoacyl-tRNA entities in vivo and helps enforce protein L-homochirality.</text>
</comment>
<comment type="catalytic activity">
    <reaction evidence="1">
        <text>glycyl-tRNA(Ala) + H2O = tRNA(Ala) + glycine + H(+)</text>
        <dbReference type="Rhea" id="RHEA:53744"/>
        <dbReference type="Rhea" id="RHEA-COMP:9657"/>
        <dbReference type="Rhea" id="RHEA-COMP:13640"/>
        <dbReference type="ChEBI" id="CHEBI:15377"/>
        <dbReference type="ChEBI" id="CHEBI:15378"/>
        <dbReference type="ChEBI" id="CHEBI:57305"/>
        <dbReference type="ChEBI" id="CHEBI:78442"/>
        <dbReference type="ChEBI" id="CHEBI:78522"/>
        <dbReference type="EC" id="3.1.1.96"/>
    </reaction>
</comment>
<comment type="catalytic activity">
    <reaction evidence="1">
        <text>a D-aminoacyl-tRNA + H2O = a tRNA + a D-alpha-amino acid + H(+)</text>
        <dbReference type="Rhea" id="RHEA:13953"/>
        <dbReference type="Rhea" id="RHEA-COMP:10123"/>
        <dbReference type="Rhea" id="RHEA-COMP:10124"/>
        <dbReference type="ChEBI" id="CHEBI:15377"/>
        <dbReference type="ChEBI" id="CHEBI:15378"/>
        <dbReference type="ChEBI" id="CHEBI:59871"/>
        <dbReference type="ChEBI" id="CHEBI:78442"/>
        <dbReference type="ChEBI" id="CHEBI:79333"/>
        <dbReference type="EC" id="3.1.1.96"/>
    </reaction>
</comment>
<comment type="subunit">
    <text evidence="1">Homodimer.</text>
</comment>
<comment type="subcellular location">
    <subcellularLocation>
        <location evidence="1">Cytoplasm</location>
    </subcellularLocation>
</comment>
<comment type="domain">
    <text evidence="1">A Gly-cisPro motif from one monomer fits into the active site of the other monomer to allow specific chiral rejection of L-amino acids.</text>
</comment>
<comment type="similarity">
    <text evidence="1">Belongs to the DTD family.</text>
</comment>
<dbReference type="EC" id="3.1.1.96" evidence="1"/>
<dbReference type="EMBL" id="CP000227">
    <property type="protein sequence ID" value="ACM14619.1"/>
    <property type="molecule type" value="Genomic_DNA"/>
</dbReference>
<dbReference type="SMR" id="B9IYY0"/>
<dbReference type="KEGG" id="bcq:BCQ_4192"/>
<dbReference type="HOGENOM" id="CLU_076901_1_0_9"/>
<dbReference type="Proteomes" id="UP000000441">
    <property type="component" value="Chromosome"/>
</dbReference>
<dbReference type="GO" id="GO:0005737">
    <property type="term" value="C:cytoplasm"/>
    <property type="evidence" value="ECO:0007669"/>
    <property type="project" value="UniProtKB-SubCell"/>
</dbReference>
<dbReference type="GO" id="GO:0051500">
    <property type="term" value="F:D-tyrosyl-tRNA(Tyr) deacylase activity"/>
    <property type="evidence" value="ECO:0007669"/>
    <property type="project" value="TreeGrafter"/>
</dbReference>
<dbReference type="GO" id="GO:0106026">
    <property type="term" value="F:Gly-tRNA(Ala) deacylase activity"/>
    <property type="evidence" value="ECO:0007669"/>
    <property type="project" value="UniProtKB-UniRule"/>
</dbReference>
<dbReference type="GO" id="GO:0043908">
    <property type="term" value="F:Ser(Gly)-tRNA(Ala) hydrolase activity"/>
    <property type="evidence" value="ECO:0007669"/>
    <property type="project" value="UniProtKB-UniRule"/>
</dbReference>
<dbReference type="GO" id="GO:0000049">
    <property type="term" value="F:tRNA binding"/>
    <property type="evidence" value="ECO:0007669"/>
    <property type="project" value="UniProtKB-UniRule"/>
</dbReference>
<dbReference type="GO" id="GO:0019478">
    <property type="term" value="P:D-amino acid catabolic process"/>
    <property type="evidence" value="ECO:0007669"/>
    <property type="project" value="UniProtKB-UniRule"/>
</dbReference>
<dbReference type="CDD" id="cd00563">
    <property type="entry name" value="Dtyr_deacylase"/>
    <property type="match status" value="1"/>
</dbReference>
<dbReference type="FunFam" id="3.50.80.10:FF:000001">
    <property type="entry name" value="D-aminoacyl-tRNA deacylase"/>
    <property type="match status" value="1"/>
</dbReference>
<dbReference type="Gene3D" id="3.50.80.10">
    <property type="entry name" value="D-tyrosyl-tRNA(Tyr) deacylase"/>
    <property type="match status" value="1"/>
</dbReference>
<dbReference type="HAMAP" id="MF_00518">
    <property type="entry name" value="Deacylase_Dtd"/>
    <property type="match status" value="1"/>
</dbReference>
<dbReference type="InterPro" id="IPR003732">
    <property type="entry name" value="Daa-tRNA_deacyls_DTD"/>
</dbReference>
<dbReference type="InterPro" id="IPR023509">
    <property type="entry name" value="DTD-like_sf"/>
</dbReference>
<dbReference type="NCBIfam" id="TIGR00256">
    <property type="entry name" value="D-aminoacyl-tRNA deacylase"/>
    <property type="match status" value="1"/>
</dbReference>
<dbReference type="PANTHER" id="PTHR10472:SF5">
    <property type="entry name" value="D-AMINOACYL-TRNA DEACYLASE 1"/>
    <property type="match status" value="1"/>
</dbReference>
<dbReference type="PANTHER" id="PTHR10472">
    <property type="entry name" value="D-TYROSYL-TRNA TYR DEACYLASE"/>
    <property type="match status" value="1"/>
</dbReference>
<dbReference type="Pfam" id="PF02580">
    <property type="entry name" value="Tyr_Deacylase"/>
    <property type="match status" value="1"/>
</dbReference>
<dbReference type="SUPFAM" id="SSF69500">
    <property type="entry name" value="DTD-like"/>
    <property type="match status" value="1"/>
</dbReference>
<protein>
    <recommendedName>
        <fullName evidence="1">D-aminoacyl-tRNA deacylase</fullName>
        <shortName evidence="1">DTD</shortName>
        <ecNumber evidence="1">3.1.1.96</ecNumber>
    </recommendedName>
    <alternativeName>
        <fullName evidence="1">Gly-tRNA(Ala) deacylase</fullName>
    </alternativeName>
</protein>
<accession>B9IYY0</accession>
<sequence length="146" mass="16342">MRVVLQRSKEASVTVDGEIVGQIPFGLTLLVGITHEDTEKDATYIAEKIANLRIFEDESGKMNHSVLDVEGQVLSISQFTLYGDCRKGRRPNFMDAAKPDYAERLYDFFNEEVRKQGLHVETGKFGAMMDVSLINDGPVTLIVESK</sequence>
<reference key="1">
    <citation type="journal article" date="2009" name="J. Bacteriol.">
        <title>Complete genome sequence of the extremophilic Bacillus cereus strain Q1 with industrial applications.</title>
        <authorList>
            <person name="Xiong Z."/>
            <person name="Jiang Y."/>
            <person name="Qi D."/>
            <person name="Lu H."/>
            <person name="Yang F."/>
            <person name="Yang J."/>
            <person name="Chen L."/>
            <person name="Sun L."/>
            <person name="Xu X."/>
            <person name="Xue Y."/>
            <person name="Zhu Y."/>
            <person name="Jin Q."/>
        </authorList>
    </citation>
    <scope>NUCLEOTIDE SEQUENCE [LARGE SCALE GENOMIC DNA]</scope>
    <source>
        <strain>Q1</strain>
    </source>
</reference>
<organism>
    <name type="scientific">Bacillus cereus (strain Q1)</name>
    <dbReference type="NCBI Taxonomy" id="361100"/>
    <lineage>
        <taxon>Bacteria</taxon>
        <taxon>Bacillati</taxon>
        <taxon>Bacillota</taxon>
        <taxon>Bacilli</taxon>
        <taxon>Bacillales</taxon>
        <taxon>Bacillaceae</taxon>
        <taxon>Bacillus</taxon>
        <taxon>Bacillus cereus group</taxon>
    </lineage>
</organism>
<proteinExistence type="inferred from homology"/>
<evidence type="ECO:0000255" key="1">
    <source>
        <dbReference type="HAMAP-Rule" id="MF_00518"/>
    </source>
</evidence>
<name>DTD_BACCQ</name>
<keyword id="KW-0963">Cytoplasm</keyword>
<keyword id="KW-0378">Hydrolase</keyword>
<keyword id="KW-0694">RNA-binding</keyword>
<keyword id="KW-0820">tRNA-binding</keyword>
<feature type="chain" id="PRO_1000146183" description="D-aminoacyl-tRNA deacylase">
    <location>
        <begin position="1"/>
        <end position="146"/>
    </location>
</feature>
<feature type="short sequence motif" description="Gly-cisPro motif, important for rejection of L-amino acids" evidence="1">
    <location>
        <begin position="137"/>
        <end position="138"/>
    </location>
</feature>